<proteinExistence type="inferred from homology"/>
<protein>
    <recommendedName>
        <fullName evidence="1">Phosphoenolpyruvate carboxylase</fullName>
        <shortName evidence="1">PEPC</shortName>
        <shortName evidence="1">PEPCase</shortName>
        <ecNumber evidence="1">4.1.1.31</ecNumber>
    </recommendedName>
</protein>
<reference key="1">
    <citation type="journal article" date="2011" name="J. Bacteriol.">
        <title>Comparative genomics of 28 Salmonella enterica isolates: evidence for CRISPR-mediated adaptive sublineage evolution.</title>
        <authorList>
            <person name="Fricke W.F."/>
            <person name="Mammel M.K."/>
            <person name="McDermott P.F."/>
            <person name="Tartera C."/>
            <person name="White D.G."/>
            <person name="Leclerc J.E."/>
            <person name="Ravel J."/>
            <person name="Cebula T.A."/>
        </authorList>
    </citation>
    <scope>NUCLEOTIDE SEQUENCE [LARGE SCALE GENOMIC DNA]</scope>
    <source>
        <strain>SL476</strain>
    </source>
</reference>
<gene>
    <name evidence="1" type="primary">ppc</name>
    <name type="ordered locus">SeHA_C4447</name>
</gene>
<keyword id="KW-0120">Carbon dioxide fixation</keyword>
<keyword id="KW-0456">Lyase</keyword>
<keyword id="KW-0460">Magnesium</keyword>
<evidence type="ECO:0000255" key="1">
    <source>
        <dbReference type="HAMAP-Rule" id="MF_00595"/>
    </source>
</evidence>
<comment type="function">
    <text evidence="1">Forms oxaloacetate, a four-carbon dicarboxylic acid source for the tricarboxylic acid cycle.</text>
</comment>
<comment type="catalytic activity">
    <reaction evidence="1">
        <text>oxaloacetate + phosphate = phosphoenolpyruvate + hydrogencarbonate</text>
        <dbReference type="Rhea" id="RHEA:28370"/>
        <dbReference type="ChEBI" id="CHEBI:16452"/>
        <dbReference type="ChEBI" id="CHEBI:17544"/>
        <dbReference type="ChEBI" id="CHEBI:43474"/>
        <dbReference type="ChEBI" id="CHEBI:58702"/>
        <dbReference type="EC" id="4.1.1.31"/>
    </reaction>
</comment>
<comment type="cofactor">
    <cofactor evidence="1">
        <name>Mg(2+)</name>
        <dbReference type="ChEBI" id="CHEBI:18420"/>
    </cofactor>
</comment>
<comment type="similarity">
    <text evidence="1">Belongs to the PEPCase type 1 family.</text>
</comment>
<dbReference type="EC" id="4.1.1.31" evidence="1"/>
<dbReference type="EMBL" id="CP001120">
    <property type="protein sequence ID" value="ACF67344.1"/>
    <property type="molecule type" value="Genomic_DNA"/>
</dbReference>
<dbReference type="RefSeq" id="WP_001005548.1">
    <property type="nucleotide sequence ID" value="NC_011083.1"/>
</dbReference>
<dbReference type="SMR" id="B4TCQ2"/>
<dbReference type="KEGG" id="seh:SeHA_C4447"/>
<dbReference type="HOGENOM" id="CLU_006557_2_0_6"/>
<dbReference type="Proteomes" id="UP000001866">
    <property type="component" value="Chromosome"/>
</dbReference>
<dbReference type="GO" id="GO:0005829">
    <property type="term" value="C:cytosol"/>
    <property type="evidence" value="ECO:0007669"/>
    <property type="project" value="TreeGrafter"/>
</dbReference>
<dbReference type="GO" id="GO:0000287">
    <property type="term" value="F:magnesium ion binding"/>
    <property type="evidence" value="ECO:0007669"/>
    <property type="project" value="UniProtKB-UniRule"/>
</dbReference>
<dbReference type="GO" id="GO:0008964">
    <property type="term" value="F:phosphoenolpyruvate carboxylase activity"/>
    <property type="evidence" value="ECO:0007669"/>
    <property type="project" value="UniProtKB-UniRule"/>
</dbReference>
<dbReference type="GO" id="GO:0015977">
    <property type="term" value="P:carbon fixation"/>
    <property type="evidence" value="ECO:0007669"/>
    <property type="project" value="UniProtKB-UniRule"/>
</dbReference>
<dbReference type="GO" id="GO:0006107">
    <property type="term" value="P:oxaloacetate metabolic process"/>
    <property type="evidence" value="ECO:0007669"/>
    <property type="project" value="UniProtKB-UniRule"/>
</dbReference>
<dbReference type="GO" id="GO:0006099">
    <property type="term" value="P:tricarboxylic acid cycle"/>
    <property type="evidence" value="ECO:0007669"/>
    <property type="project" value="InterPro"/>
</dbReference>
<dbReference type="FunFam" id="1.20.1440.90:FF:000002">
    <property type="entry name" value="Phosphoenolpyruvate carboxylase"/>
    <property type="match status" value="1"/>
</dbReference>
<dbReference type="Gene3D" id="1.20.1440.90">
    <property type="entry name" value="Phosphoenolpyruvate/pyruvate domain"/>
    <property type="match status" value="1"/>
</dbReference>
<dbReference type="HAMAP" id="MF_00595">
    <property type="entry name" value="PEPcase_type1"/>
    <property type="match status" value="1"/>
</dbReference>
<dbReference type="InterPro" id="IPR021135">
    <property type="entry name" value="PEP_COase"/>
</dbReference>
<dbReference type="InterPro" id="IPR022805">
    <property type="entry name" value="PEP_COase_bac/pln-type"/>
</dbReference>
<dbReference type="InterPro" id="IPR018129">
    <property type="entry name" value="PEP_COase_Lys_AS"/>
</dbReference>
<dbReference type="InterPro" id="IPR033129">
    <property type="entry name" value="PEPCASE_His_AS"/>
</dbReference>
<dbReference type="InterPro" id="IPR015813">
    <property type="entry name" value="Pyrv/PenolPyrv_kinase-like_dom"/>
</dbReference>
<dbReference type="NCBIfam" id="NF000584">
    <property type="entry name" value="PRK00009.1"/>
    <property type="match status" value="1"/>
</dbReference>
<dbReference type="PANTHER" id="PTHR30523">
    <property type="entry name" value="PHOSPHOENOLPYRUVATE CARBOXYLASE"/>
    <property type="match status" value="1"/>
</dbReference>
<dbReference type="PANTHER" id="PTHR30523:SF6">
    <property type="entry name" value="PHOSPHOENOLPYRUVATE CARBOXYLASE"/>
    <property type="match status" value="1"/>
</dbReference>
<dbReference type="Pfam" id="PF00311">
    <property type="entry name" value="PEPcase"/>
    <property type="match status" value="1"/>
</dbReference>
<dbReference type="PRINTS" id="PR00150">
    <property type="entry name" value="PEPCARBXLASE"/>
</dbReference>
<dbReference type="SUPFAM" id="SSF51621">
    <property type="entry name" value="Phosphoenolpyruvate/pyruvate domain"/>
    <property type="match status" value="1"/>
</dbReference>
<dbReference type="PROSITE" id="PS00781">
    <property type="entry name" value="PEPCASE_1"/>
    <property type="match status" value="1"/>
</dbReference>
<dbReference type="PROSITE" id="PS00393">
    <property type="entry name" value="PEPCASE_2"/>
    <property type="match status" value="1"/>
</dbReference>
<name>CAPP_SALHS</name>
<feature type="chain" id="PRO_1000129841" description="Phosphoenolpyruvate carboxylase">
    <location>
        <begin position="1"/>
        <end position="883"/>
    </location>
</feature>
<feature type="active site" evidence="1">
    <location>
        <position position="138"/>
    </location>
</feature>
<feature type="active site" evidence="1">
    <location>
        <position position="546"/>
    </location>
</feature>
<accession>B4TCQ2</accession>
<sequence>MNEQYSALRSNVSMLGKVLGETIKDALGEHILDRVETIRKLSKSSRAGNEANRQELLTTLQNLSNDELLPVARAFSQFLNLANTAEQYHSISPKGEAASNPEVIARTLRKLKNQPDLNDATIKKAVESLSLELVLTAHPTEITRRTLIHKMGEINNCLKQLDNTDIADYERHQVMRRLRQLIAQSWHTDEIRKQRPSPVDEAKWGFAVVENSLWQGVPNYLRELNEQLEENLGYKLPVDFVPVRFTSWMGGDRDGNPNVTADITRHVLLLSRWKATDLFLKDIHVLVSELSMVDATPELLALVGEEGASEPYRYLMKKLRARLMATQSWLEARLKGEKLPKPAGLLTQNEQLWEPLYACYQSLQACGMGIIANGELLDTLRRVKCFGVPLVRIDIRQESTRHTEALGEITRYLGIGDYESWSEADKQAFLIRELNSKRPLLPRNWEPSNDTREVLETCKVIAEAPKGSIAAYVISMAKTPSDVLAVHLLLKEAGIGFAMPVAPLFETLDDLNNADDVMTQLLNIDWYRGLIQGKQMVMIGYSDSAKDAGVMAASWAQYQAQDALIKTCEKAGIELTLFHGRGGSIGRGGAPAHAALLSQPPGSLKGGLRVTEQGEMIRFKYGLPEVTVSSLSLYTSAILEANLLPPPEPKDSWRHIMDELSVISCETYRGYVRENKDFVPYFRSATPEQELGKLPLGSRPAKRRPTGGVESLRAIPWIFAWTQNRLMLPAWLGAGTALQKVVEDGKQSELEAMCRDWPFFSTRLGMLEMVFSKADLWLADYYDQRLVAKTLWPLGKELRDLLEEDIKVVLAIANDSHLMADLPWIAESIQLRNVYTDPLNVLQAELLYRSRLTEEQGKSPDPRVEQALMVTIAGVAAGMRNTG</sequence>
<organism>
    <name type="scientific">Salmonella heidelberg (strain SL476)</name>
    <dbReference type="NCBI Taxonomy" id="454169"/>
    <lineage>
        <taxon>Bacteria</taxon>
        <taxon>Pseudomonadati</taxon>
        <taxon>Pseudomonadota</taxon>
        <taxon>Gammaproteobacteria</taxon>
        <taxon>Enterobacterales</taxon>
        <taxon>Enterobacteriaceae</taxon>
        <taxon>Salmonella</taxon>
    </lineage>
</organism>